<sequence>MSSKEQKTPEGQAPEEIIMDQHEEIEAVEPEASAEQVDPRDEKIANLEAQLAEAQTRERDGILRVKAEMENLRRRTELDIEKAHKFALEKFINELLPVIDSLDRALEVADKANPDMSAMVEGIELTLKSMLDVVRKFGVEVIAETNVPLDPNVHQAIAMVESDDVAPGNVLGIMQKGYTLNGRTIRAAMVTVAKAKA</sequence>
<keyword id="KW-0143">Chaperone</keyword>
<keyword id="KW-0963">Cytoplasm</keyword>
<keyword id="KW-0346">Stress response</keyword>
<evidence type="ECO:0000255" key="1">
    <source>
        <dbReference type="HAMAP-Rule" id="MF_01151"/>
    </source>
</evidence>
<evidence type="ECO:0000256" key="2">
    <source>
        <dbReference type="SAM" id="MobiDB-lite"/>
    </source>
</evidence>
<name>GRPE_ECOLC</name>
<dbReference type="EMBL" id="CP000946">
    <property type="protein sequence ID" value="ACA76737.1"/>
    <property type="molecule type" value="Genomic_DNA"/>
</dbReference>
<dbReference type="RefSeq" id="WP_001296310.1">
    <property type="nucleotide sequence ID" value="NZ_MTFT01000037.1"/>
</dbReference>
<dbReference type="SMR" id="B1IVM0"/>
<dbReference type="GeneID" id="93774463"/>
<dbReference type="KEGG" id="ecl:EcolC_1070"/>
<dbReference type="HOGENOM" id="CLU_057217_6_0_6"/>
<dbReference type="GO" id="GO:0005829">
    <property type="term" value="C:cytosol"/>
    <property type="evidence" value="ECO:0007669"/>
    <property type="project" value="TreeGrafter"/>
</dbReference>
<dbReference type="GO" id="GO:0000774">
    <property type="term" value="F:adenyl-nucleotide exchange factor activity"/>
    <property type="evidence" value="ECO:0007669"/>
    <property type="project" value="InterPro"/>
</dbReference>
<dbReference type="GO" id="GO:0042803">
    <property type="term" value="F:protein homodimerization activity"/>
    <property type="evidence" value="ECO:0007669"/>
    <property type="project" value="InterPro"/>
</dbReference>
<dbReference type="GO" id="GO:0051087">
    <property type="term" value="F:protein-folding chaperone binding"/>
    <property type="evidence" value="ECO:0007669"/>
    <property type="project" value="InterPro"/>
</dbReference>
<dbReference type="GO" id="GO:0051082">
    <property type="term" value="F:unfolded protein binding"/>
    <property type="evidence" value="ECO:0007669"/>
    <property type="project" value="TreeGrafter"/>
</dbReference>
<dbReference type="GO" id="GO:0006457">
    <property type="term" value="P:protein folding"/>
    <property type="evidence" value="ECO:0007669"/>
    <property type="project" value="InterPro"/>
</dbReference>
<dbReference type="CDD" id="cd00446">
    <property type="entry name" value="GrpE"/>
    <property type="match status" value="1"/>
</dbReference>
<dbReference type="FunFam" id="2.30.22.10:FF:000001">
    <property type="entry name" value="Protein GrpE"/>
    <property type="match status" value="1"/>
</dbReference>
<dbReference type="FunFam" id="3.90.20.20:FF:000001">
    <property type="entry name" value="Protein GrpE"/>
    <property type="match status" value="1"/>
</dbReference>
<dbReference type="Gene3D" id="3.90.20.20">
    <property type="match status" value="1"/>
</dbReference>
<dbReference type="Gene3D" id="2.30.22.10">
    <property type="entry name" value="Head domain of nucleotide exchange factor GrpE"/>
    <property type="match status" value="1"/>
</dbReference>
<dbReference type="HAMAP" id="MF_01151">
    <property type="entry name" value="GrpE"/>
    <property type="match status" value="1"/>
</dbReference>
<dbReference type="InterPro" id="IPR000740">
    <property type="entry name" value="GrpE"/>
</dbReference>
<dbReference type="InterPro" id="IPR013805">
    <property type="entry name" value="GrpE_coiled_coil"/>
</dbReference>
<dbReference type="InterPro" id="IPR009012">
    <property type="entry name" value="GrpE_head"/>
</dbReference>
<dbReference type="NCBIfam" id="NF007655">
    <property type="entry name" value="PRK10325.1"/>
    <property type="match status" value="1"/>
</dbReference>
<dbReference type="NCBIfam" id="NF010738">
    <property type="entry name" value="PRK14140.1"/>
    <property type="match status" value="1"/>
</dbReference>
<dbReference type="NCBIfam" id="NF010748">
    <property type="entry name" value="PRK14150.1"/>
    <property type="match status" value="1"/>
</dbReference>
<dbReference type="PANTHER" id="PTHR21237">
    <property type="entry name" value="GRPE PROTEIN"/>
    <property type="match status" value="1"/>
</dbReference>
<dbReference type="PANTHER" id="PTHR21237:SF23">
    <property type="entry name" value="GRPE PROTEIN HOMOLOG, MITOCHONDRIAL"/>
    <property type="match status" value="1"/>
</dbReference>
<dbReference type="Pfam" id="PF01025">
    <property type="entry name" value="GrpE"/>
    <property type="match status" value="1"/>
</dbReference>
<dbReference type="PRINTS" id="PR00773">
    <property type="entry name" value="GRPEPROTEIN"/>
</dbReference>
<dbReference type="SUPFAM" id="SSF58014">
    <property type="entry name" value="Coiled-coil domain of nucleotide exchange factor GrpE"/>
    <property type="match status" value="1"/>
</dbReference>
<dbReference type="SUPFAM" id="SSF51064">
    <property type="entry name" value="Head domain of nucleotide exchange factor GrpE"/>
    <property type="match status" value="1"/>
</dbReference>
<dbReference type="PROSITE" id="PS01071">
    <property type="entry name" value="GRPE"/>
    <property type="match status" value="1"/>
</dbReference>
<protein>
    <recommendedName>
        <fullName evidence="1">Protein GrpE</fullName>
    </recommendedName>
    <alternativeName>
        <fullName evidence="1">HSP-70 cofactor</fullName>
    </alternativeName>
</protein>
<organism>
    <name type="scientific">Escherichia coli (strain ATCC 8739 / DSM 1576 / NBRC 3972 / NCIMB 8545 / WDCM 00012 / Crooks)</name>
    <dbReference type="NCBI Taxonomy" id="481805"/>
    <lineage>
        <taxon>Bacteria</taxon>
        <taxon>Pseudomonadati</taxon>
        <taxon>Pseudomonadota</taxon>
        <taxon>Gammaproteobacteria</taxon>
        <taxon>Enterobacterales</taxon>
        <taxon>Enterobacteriaceae</taxon>
        <taxon>Escherichia</taxon>
    </lineage>
</organism>
<feature type="chain" id="PRO_1000085113" description="Protein GrpE">
    <location>
        <begin position="1"/>
        <end position="197"/>
    </location>
</feature>
<feature type="region of interest" description="Disordered" evidence="2">
    <location>
        <begin position="1"/>
        <end position="39"/>
    </location>
</feature>
<gene>
    <name evidence="1" type="primary">grpE</name>
    <name type="ordered locus">EcolC_1070</name>
</gene>
<reference key="1">
    <citation type="submission" date="2008-02" db="EMBL/GenBank/DDBJ databases">
        <title>Complete sequence of Escherichia coli C str. ATCC 8739.</title>
        <authorList>
            <person name="Copeland A."/>
            <person name="Lucas S."/>
            <person name="Lapidus A."/>
            <person name="Glavina del Rio T."/>
            <person name="Dalin E."/>
            <person name="Tice H."/>
            <person name="Bruce D."/>
            <person name="Goodwin L."/>
            <person name="Pitluck S."/>
            <person name="Kiss H."/>
            <person name="Brettin T."/>
            <person name="Detter J.C."/>
            <person name="Han C."/>
            <person name="Kuske C.R."/>
            <person name="Schmutz J."/>
            <person name="Larimer F."/>
            <person name="Land M."/>
            <person name="Hauser L."/>
            <person name="Kyrpides N."/>
            <person name="Mikhailova N."/>
            <person name="Ingram L."/>
            <person name="Richardson P."/>
        </authorList>
    </citation>
    <scope>NUCLEOTIDE SEQUENCE [LARGE SCALE GENOMIC DNA]</scope>
    <source>
        <strain>ATCC 8739 / DSM 1576 / NBRC 3972 / NCIMB 8545 / WDCM 00012 / Crooks</strain>
    </source>
</reference>
<proteinExistence type="inferred from homology"/>
<comment type="function">
    <text evidence="1">Participates actively in the response to hyperosmotic and heat shock by preventing the aggregation of stress-denatured proteins, in association with DnaK and GrpE. It is the nucleotide exchange factor for DnaK and may function as a thermosensor. Unfolded proteins bind initially to DnaJ; upon interaction with the DnaJ-bound protein, DnaK hydrolyzes its bound ATP, resulting in the formation of a stable complex. GrpE releases ADP from DnaK; ATP binding to DnaK triggers the release of the substrate protein, thus completing the reaction cycle. Several rounds of ATP-dependent interactions between DnaJ, DnaK and GrpE are required for fully efficient folding.</text>
</comment>
<comment type="subunit">
    <text evidence="1">Homodimer.</text>
</comment>
<comment type="subcellular location">
    <subcellularLocation>
        <location evidence="1">Cytoplasm</location>
    </subcellularLocation>
</comment>
<comment type="similarity">
    <text evidence="1">Belongs to the GrpE family.</text>
</comment>
<accession>B1IVM0</accession>